<evidence type="ECO:0000255" key="1">
    <source>
        <dbReference type="HAMAP-Rule" id="MF_01382"/>
    </source>
</evidence>
<reference key="1">
    <citation type="journal article" date="2010" name="Genome Biol.">
        <title>Structure and dynamics of the pan-genome of Streptococcus pneumoniae and closely related species.</title>
        <authorList>
            <person name="Donati C."/>
            <person name="Hiller N.L."/>
            <person name="Tettelin H."/>
            <person name="Muzzi A."/>
            <person name="Croucher N.J."/>
            <person name="Angiuoli S.V."/>
            <person name="Oggioni M."/>
            <person name="Dunning Hotopp J.C."/>
            <person name="Hu F.Z."/>
            <person name="Riley D.R."/>
            <person name="Covacci A."/>
            <person name="Mitchell T.J."/>
            <person name="Bentley S.D."/>
            <person name="Kilian M."/>
            <person name="Ehrlich G.D."/>
            <person name="Rappuoli R."/>
            <person name="Moxon E.R."/>
            <person name="Masignani V."/>
        </authorList>
    </citation>
    <scope>NUCLEOTIDE SEQUENCE [LARGE SCALE GENOMIC DNA]</scope>
    <source>
        <strain>70585</strain>
    </source>
</reference>
<proteinExistence type="inferred from homology"/>
<name>SECA_STRP7</name>
<gene>
    <name evidence="1" type="primary">secA</name>
    <name type="ordered locus">SP70585_1741</name>
</gene>
<sequence length="837" mass="94972">MANILKTIIENDKGEIRRLEKMADKVFKYEDQMAALTDDQLKAKTVEFKERYQNGESLDSLLYEAFAVVREGAKRVLGLFPYKVQVMGGIVLHHGDVPEMRTGEGKTLTATMPVYLNALSGKGVHVVTVNEYLSERDATEMGELYSWLGLSVGINLATKSPMEKKEAYECDITYSTNSEIGFDYLRDNMVVRAENMVQRPLNYALVDEVDSILIDEARTPLIVSGANAVETSQLYHMADHYVKSLNKDDYIIDVQSKTIGLSDSGIDRAESYFKLENLYDIENVALTHFIDNALRANYIMLLDIDYVVSEEQEILIVDQFTGRTMEGRRYSDGLHQAIEAKEGVPIQDETKTSASITYQNLFRMYKKLSGMTGTGKTEEEEFREIYNIRVIPIPTNRPVQRIDHSDLLYASIESKFKAVVEDVKARYQKGQPVLVGTVAVETSDYISKKLVAAGVPHEVLNAKNHYREAQIIMNAGQRGAVTIATNMAGRGTDIKLGEGVRELGGLCVIGTERHESRRIDNQLRGRSGRQGDPGESQFYLSLEDDLMKRFGSERLKGIFERLNMSEEAIESRMLTRQVEAAQKRVEGNNYDTRKQVLQYDDVMREQREIIYTQRYDVITADRDLAPEIQAMIKRTIGRVVDGHARAKQDEKLEAILNFAKYNLLPEDSITMEDLSGLSDKAIKEELFQRALKVYDSQVSKLRDEEAVKEFQKVLILRVVDNKWTDHIDALDQLRNAVGLRGYAQNNPVVEYQAEGFRMFNDMIGSIEFDVTRLMMKAQIHEQERPQAERHISTTATRNIAAHQASMPEDLDLSQIGRNELCPCGSGKKFKNCHGKRQ</sequence>
<keyword id="KW-0067">ATP-binding</keyword>
<keyword id="KW-1003">Cell membrane</keyword>
<keyword id="KW-0963">Cytoplasm</keyword>
<keyword id="KW-0472">Membrane</keyword>
<keyword id="KW-0479">Metal-binding</keyword>
<keyword id="KW-0547">Nucleotide-binding</keyword>
<keyword id="KW-0653">Protein transport</keyword>
<keyword id="KW-1278">Translocase</keyword>
<keyword id="KW-0811">Translocation</keyword>
<keyword id="KW-0813">Transport</keyword>
<keyword id="KW-0862">Zinc</keyword>
<organism>
    <name type="scientific">Streptococcus pneumoniae (strain 70585)</name>
    <dbReference type="NCBI Taxonomy" id="488221"/>
    <lineage>
        <taxon>Bacteria</taxon>
        <taxon>Bacillati</taxon>
        <taxon>Bacillota</taxon>
        <taxon>Bacilli</taxon>
        <taxon>Lactobacillales</taxon>
        <taxon>Streptococcaceae</taxon>
        <taxon>Streptococcus</taxon>
    </lineage>
</organism>
<dbReference type="EC" id="7.4.2.8" evidence="1"/>
<dbReference type="EMBL" id="CP000918">
    <property type="protein sequence ID" value="ACO17544.1"/>
    <property type="molecule type" value="Genomic_DNA"/>
</dbReference>
<dbReference type="RefSeq" id="WP_001274093.1">
    <property type="nucleotide sequence ID" value="NC_012468.1"/>
</dbReference>
<dbReference type="SMR" id="C1C8U0"/>
<dbReference type="KEGG" id="snm:SP70585_1741"/>
<dbReference type="HOGENOM" id="CLU_005314_3_0_9"/>
<dbReference type="Proteomes" id="UP000002211">
    <property type="component" value="Chromosome"/>
</dbReference>
<dbReference type="GO" id="GO:0031522">
    <property type="term" value="C:cell envelope Sec protein transport complex"/>
    <property type="evidence" value="ECO:0007669"/>
    <property type="project" value="TreeGrafter"/>
</dbReference>
<dbReference type="GO" id="GO:0005829">
    <property type="term" value="C:cytosol"/>
    <property type="evidence" value="ECO:0007669"/>
    <property type="project" value="TreeGrafter"/>
</dbReference>
<dbReference type="GO" id="GO:0005886">
    <property type="term" value="C:plasma membrane"/>
    <property type="evidence" value="ECO:0007669"/>
    <property type="project" value="UniProtKB-SubCell"/>
</dbReference>
<dbReference type="GO" id="GO:0005524">
    <property type="term" value="F:ATP binding"/>
    <property type="evidence" value="ECO:0007669"/>
    <property type="project" value="UniProtKB-UniRule"/>
</dbReference>
<dbReference type="GO" id="GO:0046872">
    <property type="term" value="F:metal ion binding"/>
    <property type="evidence" value="ECO:0007669"/>
    <property type="project" value="UniProtKB-KW"/>
</dbReference>
<dbReference type="GO" id="GO:0008564">
    <property type="term" value="F:protein-exporting ATPase activity"/>
    <property type="evidence" value="ECO:0007669"/>
    <property type="project" value="UniProtKB-EC"/>
</dbReference>
<dbReference type="GO" id="GO:0065002">
    <property type="term" value="P:intracellular protein transmembrane transport"/>
    <property type="evidence" value="ECO:0007669"/>
    <property type="project" value="UniProtKB-UniRule"/>
</dbReference>
<dbReference type="GO" id="GO:0017038">
    <property type="term" value="P:protein import"/>
    <property type="evidence" value="ECO:0007669"/>
    <property type="project" value="InterPro"/>
</dbReference>
<dbReference type="GO" id="GO:0006605">
    <property type="term" value="P:protein targeting"/>
    <property type="evidence" value="ECO:0007669"/>
    <property type="project" value="UniProtKB-UniRule"/>
</dbReference>
<dbReference type="GO" id="GO:0043952">
    <property type="term" value="P:protein transport by the Sec complex"/>
    <property type="evidence" value="ECO:0007669"/>
    <property type="project" value="TreeGrafter"/>
</dbReference>
<dbReference type="CDD" id="cd17928">
    <property type="entry name" value="DEXDc_SecA"/>
    <property type="match status" value="1"/>
</dbReference>
<dbReference type="CDD" id="cd18803">
    <property type="entry name" value="SF2_C_secA"/>
    <property type="match status" value="1"/>
</dbReference>
<dbReference type="FunFam" id="1.10.3060.10:FF:000002">
    <property type="entry name" value="Preprotein translocase subunit SecA"/>
    <property type="match status" value="1"/>
</dbReference>
<dbReference type="FunFam" id="3.40.50.300:FF:000429">
    <property type="entry name" value="Preprotein translocase subunit SecA"/>
    <property type="match status" value="1"/>
</dbReference>
<dbReference type="FunFam" id="3.90.1440.10:FF:000001">
    <property type="entry name" value="Preprotein translocase subunit SecA"/>
    <property type="match status" value="1"/>
</dbReference>
<dbReference type="Gene3D" id="1.10.3060.10">
    <property type="entry name" value="Helical scaffold and wing domains of SecA"/>
    <property type="match status" value="1"/>
</dbReference>
<dbReference type="Gene3D" id="3.40.50.300">
    <property type="entry name" value="P-loop containing nucleotide triphosphate hydrolases"/>
    <property type="match status" value="3"/>
</dbReference>
<dbReference type="Gene3D" id="3.90.1440.10">
    <property type="entry name" value="SecA, preprotein cross-linking domain"/>
    <property type="match status" value="1"/>
</dbReference>
<dbReference type="HAMAP" id="MF_01382">
    <property type="entry name" value="SecA"/>
    <property type="match status" value="1"/>
</dbReference>
<dbReference type="InterPro" id="IPR014001">
    <property type="entry name" value="Helicase_ATP-bd"/>
</dbReference>
<dbReference type="InterPro" id="IPR001650">
    <property type="entry name" value="Helicase_C-like"/>
</dbReference>
<dbReference type="InterPro" id="IPR027417">
    <property type="entry name" value="P-loop_NTPase"/>
</dbReference>
<dbReference type="InterPro" id="IPR004027">
    <property type="entry name" value="SEC_C_motif"/>
</dbReference>
<dbReference type="InterPro" id="IPR000185">
    <property type="entry name" value="SecA"/>
</dbReference>
<dbReference type="InterPro" id="IPR020937">
    <property type="entry name" value="SecA_CS"/>
</dbReference>
<dbReference type="InterPro" id="IPR011115">
    <property type="entry name" value="SecA_DEAD"/>
</dbReference>
<dbReference type="InterPro" id="IPR014018">
    <property type="entry name" value="SecA_motor_DEAD"/>
</dbReference>
<dbReference type="InterPro" id="IPR011130">
    <property type="entry name" value="SecA_preprotein_X-link_dom"/>
</dbReference>
<dbReference type="InterPro" id="IPR044722">
    <property type="entry name" value="SecA_SF2_C"/>
</dbReference>
<dbReference type="InterPro" id="IPR011116">
    <property type="entry name" value="SecA_Wing/Scaffold"/>
</dbReference>
<dbReference type="InterPro" id="IPR036266">
    <property type="entry name" value="SecA_Wing/Scaffold_sf"/>
</dbReference>
<dbReference type="InterPro" id="IPR036670">
    <property type="entry name" value="SecA_X-link_sf"/>
</dbReference>
<dbReference type="NCBIfam" id="NF006630">
    <property type="entry name" value="PRK09200.1"/>
    <property type="match status" value="1"/>
</dbReference>
<dbReference type="NCBIfam" id="TIGR00963">
    <property type="entry name" value="secA"/>
    <property type="match status" value="1"/>
</dbReference>
<dbReference type="PANTHER" id="PTHR30612:SF0">
    <property type="entry name" value="CHLOROPLAST PROTEIN-TRANSPORTING ATPASE"/>
    <property type="match status" value="1"/>
</dbReference>
<dbReference type="PANTHER" id="PTHR30612">
    <property type="entry name" value="SECA INNER MEMBRANE COMPONENT OF SEC PROTEIN SECRETION SYSTEM"/>
    <property type="match status" value="1"/>
</dbReference>
<dbReference type="Pfam" id="PF21090">
    <property type="entry name" value="P-loop_SecA"/>
    <property type="match status" value="2"/>
</dbReference>
<dbReference type="Pfam" id="PF02810">
    <property type="entry name" value="SEC-C"/>
    <property type="match status" value="1"/>
</dbReference>
<dbReference type="Pfam" id="PF07517">
    <property type="entry name" value="SecA_DEAD"/>
    <property type="match status" value="1"/>
</dbReference>
<dbReference type="Pfam" id="PF01043">
    <property type="entry name" value="SecA_PP_bind"/>
    <property type="match status" value="1"/>
</dbReference>
<dbReference type="Pfam" id="PF07516">
    <property type="entry name" value="SecA_SW"/>
    <property type="match status" value="1"/>
</dbReference>
<dbReference type="PRINTS" id="PR00906">
    <property type="entry name" value="SECA"/>
</dbReference>
<dbReference type="SMART" id="SM00957">
    <property type="entry name" value="SecA_DEAD"/>
    <property type="match status" value="1"/>
</dbReference>
<dbReference type="SMART" id="SM00958">
    <property type="entry name" value="SecA_PP_bind"/>
    <property type="match status" value="1"/>
</dbReference>
<dbReference type="SUPFAM" id="SSF81886">
    <property type="entry name" value="Helical scaffold and wing domains of SecA"/>
    <property type="match status" value="1"/>
</dbReference>
<dbReference type="SUPFAM" id="SSF52540">
    <property type="entry name" value="P-loop containing nucleoside triphosphate hydrolases"/>
    <property type="match status" value="2"/>
</dbReference>
<dbReference type="SUPFAM" id="SSF81767">
    <property type="entry name" value="Pre-protein crosslinking domain of SecA"/>
    <property type="match status" value="1"/>
</dbReference>
<dbReference type="PROSITE" id="PS01312">
    <property type="entry name" value="SECA"/>
    <property type="match status" value="1"/>
</dbReference>
<dbReference type="PROSITE" id="PS51196">
    <property type="entry name" value="SECA_MOTOR_DEAD"/>
    <property type="match status" value="1"/>
</dbReference>
<comment type="function">
    <text evidence="1">Part of the Sec protein translocase complex. Interacts with the SecYEG preprotein conducting channel. Has a central role in coupling the hydrolysis of ATP to the transfer of proteins into and across the cell membrane, serving as an ATP-driven molecular motor driving the stepwise translocation of polypeptide chains across the membrane.</text>
</comment>
<comment type="catalytic activity">
    <reaction evidence="1">
        <text>ATP + H2O + cellular proteinSide 1 = ADP + phosphate + cellular proteinSide 2.</text>
        <dbReference type="EC" id="7.4.2.8"/>
    </reaction>
</comment>
<comment type="cofactor">
    <cofactor evidence="1">
        <name>Zn(2+)</name>
        <dbReference type="ChEBI" id="CHEBI:29105"/>
    </cofactor>
    <text evidence="1">May bind 1 zinc ion per subunit.</text>
</comment>
<comment type="subunit">
    <text evidence="1">Monomer and homodimer. Part of the essential Sec protein translocation apparatus which comprises SecA, SecYEG and auxiliary proteins SecDF. Other proteins may also be involved.</text>
</comment>
<comment type="subcellular location">
    <subcellularLocation>
        <location evidence="1">Cell membrane</location>
        <topology evidence="1">Peripheral membrane protein</topology>
        <orientation evidence="1">Cytoplasmic side</orientation>
    </subcellularLocation>
    <subcellularLocation>
        <location evidence="1">Cytoplasm</location>
    </subcellularLocation>
    <text evidence="1">Distribution is 50-50.</text>
</comment>
<comment type="similarity">
    <text evidence="1">Belongs to the SecA family.</text>
</comment>
<feature type="chain" id="PRO_1000184246" description="Protein translocase subunit SecA">
    <location>
        <begin position="1"/>
        <end position="837"/>
    </location>
</feature>
<feature type="binding site" evidence="1">
    <location>
        <position position="85"/>
    </location>
    <ligand>
        <name>ATP</name>
        <dbReference type="ChEBI" id="CHEBI:30616"/>
    </ligand>
</feature>
<feature type="binding site" evidence="1">
    <location>
        <begin position="103"/>
        <end position="107"/>
    </location>
    <ligand>
        <name>ATP</name>
        <dbReference type="ChEBI" id="CHEBI:30616"/>
    </ligand>
</feature>
<feature type="binding site" evidence="1">
    <location>
        <position position="493"/>
    </location>
    <ligand>
        <name>ATP</name>
        <dbReference type="ChEBI" id="CHEBI:30616"/>
    </ligand>
</feature>
<feature type="binding site" evidence="1">
    <location>
        <position position="821"/>
    </location>
    <ligand>
        <name>Zn(2+)</name>
        <dbReference type="ChEBI" id="CHEBI:29105"/>
    </ligand>
</feature>
<feature type="binding site" evidence="1">
    <location>
        <position position="823"/>
    </location>
    <ligand>
        <name>Zn(2+)</name>
        <dbReference type="ChEBI" id="CHEBI:29105"/>
    </ligand>
</feature>
<feature type="binding site" evidence="1">
    <location>
        <position position="832"/>
    </location>
    <ligand>
        <name>Zn(2+)</name>
        <dbReference type="ChEBI" id="CHEBI:29105"/>
    </ligand>
</feature>
<feature type="binding site" evidence="1">
    <location>
        <position position="833"/>
    </location>
    <ligand>
        <name>Zn(2+)</name>
        <dbReference type="ChEBI" id="CHEBI:29105"/>
    </ligand>
</feature>
<protein>
    <recommendedName>
        <fullName evidence="1">Protein translocase subunit SecA</fullName>
        <ecNumber evidence="1">7.4.2.8</ecNumber>
    </recommendedName>
</protein>
<accession>C1C8U0</accession>